<accession>A5IP58</accession>
<comment type="function">
    <text evidence="1">The phosphoenolpyruvate-dependent sugar phosphotransferase system (sugar PTS), a major carbohydrate active transport system, catalyzes the phosphorylation of incoming sugar substrates concomitantly with their translocation across the cell membrane. This system is involved in glucose transport.</text>
</comment>
<comment type="catalytic activity">
    <reaction evidence="1">
        <text>N(pros)-phospho-L-histidyl-[protein] + D-glucose(out) = D-glucose 6-phosphate(in) + L-histidyl-[protein]</text>
        <dbReference type="Rhea" id="RHEA:33367"/>
        <dbReference type="Rhea" id="RHEA-COMP:9745"/>
        <dbReference type="Rhea" id="RHEA-COMP:9746"/>
        <dbReference type="ChEBI" id="CHEBI:4167"/>
        <dbReference type="ChEBI" id="CHEBI:29979"/>
        <dbReference type="ChEBI" id="CHEBI:61548"/>
        <dbReference type="ChEBI" id="CHEBI:64837"/>
        <dbReference type="EC" id="2.7.1.199"/>
    </reaction>
</comment>
<comment type="subcellular location">
    <subcellularLocation>
        <location evidence="4">Cell membrane</location>
        <topology evidence="4">Multi-pass membrane protein</topology>
    </subcellularLocation>
</comment>
<comment type="domain">
    <text evidence="4">The EIIC domain forms the PTS system translocation channel and contains the specific substrate-binding site.</text>
</comment>
<comment type="domain">
    <text evidence="3">The EIIB domain is phosphorylated by phospho-EIIA on a cysteinyl or histidyl residue, depending on the transported sugar. Then, it transfers the phosphoryl group to the sugar substrate concomitantly with the sugar uptake processed by the EIIC domain.</text>
</comment>
<comment type="domain">
    <text evidence="2">The EIIA domain is phosphorylated by phospho-HPr on a histidyl residue. Then, it transfers the phosphoryl group to the EIIB domain.</text>
</comment>
<evidence type="ECO:0000250" key="1">
    <source>
        <dbReference type="UniProtKB" id="Q57071"/>
    </source>
</evidence>
<evidence type="ECO:0000255" key="2">
    <source>
        <dbReference type="PROSITE-ProRule" id="PRU00416"/>
    </source>
</evidence>
<evidence type="ECO:0000255" key="3">
    <source>
        <dbReference type="PROSITE-ProRule" id="PRU00421"/>
    </source>
</evidence>
<evidence type="ECO:0000255" key="4">
    <source>
        <dbReference type="PROSITE-ProRule" id="PRU00426"/>
    </source>
</evidence>
<evidence type="ECO:0000305" key="5"/>
<reference key="1">
    <citation type="submission" date="2007-05" db="EMBL/GenBank/DDBJ databases">
        <title>Complete sequence of chromosome of Staphylococcus aureus subsp. aureus JH9.</title>
        <authorList>
            <consortium name="US DOE Joint Genome Institute"/>
            <person name="Copeland A."/>
            <person name="Lucas S."/>
            <person name="Lapidus A."/>
            <person name="Barry K."/>
            <person name="Detter J.C."/>
            <person name="Glavina del Rio T."/>
            <person name="Hammon N."/>
            <person name="Israni S."/>
            <person name="Pitluck S."/>
            <person name="Chain P."/>
            <person name="Malfatti S."/>
            <person name="Shin M."/>
            <person name="Vergez L."/>
            <person name="Schmutz J."/>
            <person name="Larimer F."/>
            <person name="Land M."/>
            <person name="Hauser L."/>
            <person name="Kyrpides N."/>
            <person name="Kim E."/>
            <person name="Tomasz A."/>
            <person name="Richardson P."/>
        </authorList>
    </citation>
    <scope>NUCLEOTIDE SEQUENCE [LARGE SCALE GENOMIC DNA]</scope>
    <source>
        <strain>JH9</strain>
    </source>
</reference>
<dbReference type="EC" id="2.7.1.199" evidence="1"/>
<dbReference type="EMBL" id="CP000703">
    <property type="protein sequence ID" value="ABQ47981.1"/>
    <property type="molecule type" value="Genomic_DNA"/>
</dbReference>
<dbReference type="RefSeq" id="WP_001227709.1">
    <property type="nucleotide sequence ID" value="NC_009487.1"/>
</dbReference>
<dbReference type="SMR" id="A5IP58"/>
<dbReference type="KEGG" id="saj:SaurJH9_0174"/>
<dbReference type="HOGENOM" id="CLU_012312_1_1_9"/>
<dbReference type="GO" id="GO:0005886">
    <property type="term" value="C:plasma membrane"/>
    <property type="evidence" value="ECO:0007669"/>
    <property type="project" value="UniProtKB-SubCell"/>
</dbReference>
<dbReference type="GO" id="GO:0055056">
    <property type="term" value="F:D-glucose transmembrane transporter activity"/>
    <property type="evidence" value="ECO:0007669"/>
    <property type="project" value="InterPro"/>
</dbReference>
<dbReference type="GO" id="GO:0016301">
    <property type="term" value="F:kinase activity"/>
    <property type="evidence" value="ECO:0007669"/>
    <property type="project" value="UniProtKB-KW"/>
</dbReference>
<dbReference type="GO" id="GO:0008982">
    <property type="term" value="F:protein-N(PI)-phosphohistidine-sugar phosphotransferase activity"/>
    <property type="evidence" value="ECO:0007669"/>
    <property type="project" value="InterPro"/>
</dbReference>
<dbReference type="GO" id="GO:0090563">
    <property type="term" value="F:protein-phosphocysteine-sugar phosphotransferase activity"/>
    <property type="evidence" value="ECO:0007669"/>
    <property type="project" value="TreeGrafter"/>
</dbReference>
<dbReference type="GO" id="GO:1904659">
    <property type="term" value="P:D-glucose transmembrane transport"/>
    <property type="evidence" value="ECO:0007669"/>
    <property type="project" value="InterPro"/>
</dbReference>
<dbReference type="GO" id="GO:0009401">
    <property type="term" value="P:phosphoenolpyruvate-dependent sugar phosphotransferase system"/>
    <property type="evidence" value="ECO:0007669"/>
    <property type="project" value="UniProtKB-KW"/>
</dbReference>
<dbReference type="CDD" id="cd00210">
    <property type="entry name" value="PTS_IIA_glc"/>
    <property type="match status" value="1"/>
</dbReference>
<dbReference type="CDD" id="cd00212">
    <property type="entry name" value="PTS_IIB_glc"/>
    <property type="match status" value="1"/>
</dbReference>
<dbReference type="FunFam" id="2.70.70.10:FF:000001">
    <property type="entry name" value="PTS system glucose-specific IIA component"/>
    <property type="match status" value="1"/>
</dbReference>
<dbReference type="FunFam" id="3.30.1360.60:FF:000001">
    <property type="entry name" value="PTS system glucose-specific IIBC component PtsG"/>
    <property type="match status" value="1"/>
</dbReference>
<dbReference type="Gene3D" id="2.70.70.10">
    <property type="entry name" value="Glucose Permease (Domain IIA)"/>
    <property type="match status" value="1"/>
</dbReference>
<dbReference type="Gene3D" id="3.30.1360.60">
    <property type="entry name" value="Glucose permease domain IIB"/>
    <property type="match status" value="1"/>
</dbReference>
<dbReference type="InterPro" id="IPR011055">
    <property type="entry name" value="Dup_hybrid_motif"/>
</dbReference>
<dbReference type="InterPro" id="IPR036878">
    <property type="entry name" value="Glu_permease_IIB"/>
</dbReference>
<dbReference type="InterPro" id="IPR018113">
    <property type="entry name" value="PTrfase_EIIB_Cys"/>
</dbReference>
<dbReference type="InterPro" id="IPR001127">
    <property type="entry name" value="PTS_EIIA_1_perm"/>
</dbReference>
<dbReference type="InterPro" id="IPR003352">
    <property type="entry name" value="PTS_EIIC"/>
</dbReference>
<dbReference type="InterPro" id="IPR013013">
    <property type="entry name" value="PTS_EIIC_1"/>
</dbReference>
<dbReference type="InterPro" id="IPR050429">
    <property type="entry name" value="PTS_Glucose_EIICBA"/>
</dbReference>
<dbReference type="InterPro" id="IPR001996">
    <property type="entry name" value="PTS_IIB_1"/>
</dbReference>
<dbReference type="InterPro" id="IPR011299">
    <property type="entry name" value="PTS_IIBC_glc"/>
</dbReference>
<dbReference type="NCBIfam" id="TIGR00826">
    <property type="entry name" value="EIIB_glc"/>
    <property type="match status" value="1"/>
</dbReference>
<dbReference type="NCBIfam" id="TIGR00830">
    <property type="entry name" value="PTBA"/>
    <property type="match status" value="1"/>
</dbReference>
<dbReference type="NCBIfam" id="TIGR02002">
    <property type="entry name" value="PTS-II-BC-glcB"/>
    <property type="match status" value="1"/>
</dbReference>
<dbReference type="PANTHER" id="PTHR30009">
    <property type="entry name" value="CYTOCHROME C-TYPE SYNTHESIS PROTEIN AND PTS TRANSMEMBRANE COMPONENT"/>
    <property type="match status" value="1"/>
</dbReference>
<dbReference type="PANTHER" id="PTHR30009:SF20">
    <property type="entry name" value="PTS SYSTEM GLUCOSE-SPECIFIC EIICB COMPONENT-RELATED"/>
    <property type="match status" value="1"/>
</dbReference>
<dbReference type="Pfam" id="PF00358">
    <property type="entry name" value="PTS_EIIA_1"/>
    <property type="match status" value="1"/>
</dbReference>
<dbReference type="Pfam" id="PF00367">
    <property type="entry name" value="PTS_EIIB"/>
    <property type="match status" value="1"/>
</dbReference>
<dbReference type="Pfam" id="PF02378">
    <property type="entry name" value="PTS_EIIC"/>
    <property type="match status" value="1"/>
</dbReference>
<dbReference type="SUPFAM" id="SSF51261">
    <property type="entry name" value="Duplicated hybrid motif"/>
    <property type="match status" value="1"/>
</dbReference>
<dbReference type="SUPFAM" id="SSF55604">
    <property type="entry name" value="Glucose permease domain IIB"/>
    <property type="match status" value="1"/>
</dbReference>
<dbReference type="PROSITE" id="PS51093">
    <property type="entry name" value="PTS_EIIA_TYPE_1"/>
    <property type="match status" value="1"/>
</dbReference>
<dbReference type="PROSITE" id="PS00371">
    <property type="entry name" value="PTS_EIIA_TYPE_1_HIS"/>
    <property type="match status" value="1"/>
</dbReference>
<dbReference type="PROSITE" id="PS51098">
    <property type="entry name" value="PTS_EIIB_TYPE_1"/>
    <property type="match status" value="1"/>
</dbReference>
<dbReference type="PROSITE" id="PS01035">
    <property type="entry name" value="PTS_EIIB_TYPE_1_CYS"/>
    <property type="match status" value="1"/>
</dbReference>
<dbReference type="PROSITE" id="PS51103">
    <property type="entry name" value="PTS_EIIC_TYPE_1"/>
    <property type="match status" value="1"/>
</dbReference>
<sequence length="681" mass="73958">MRKKLFGQLQRIGKALMLPVAILPAAGLLLAIGTAIQGEALQHYLPFIQNGGVQNVAKLMTAAGSIIFENLPMIFALGVAIGLAGGDGVAAIAAFVGYIIMNKTMGDFLQVTPKNVTDPASGYASILGIPTLQTGVFGGIIIGALAAWCYNKFYNINLPSYLGFFAGKRFVPIMMATTSFILAFPMALIWPTIQSGLNAFSTGLLDSNTGVAVFLFGFIKRLLIPFGLHHIFHAPFWFEFGSWKNAAGEIIHGDQRIFIEQIREGAHLTAGKFMQGEFPVMMFGLPAAALAIYHTAKPENKKVVAGLMGSAALTSFLTGITEPLEFSFLFVAPLLFFIHAVLDGLSFLTLYLLDVHLGYTFSGGFIDYVLLGVLPNKTQWWLVIPVGLVYAVIYYFVFRFLIVKLKYKTPGREDKQSQAVTASATELPYAVLEAMGGKANIKHLDACITRLRVEVNDKSKVDVPGLKDLGASGVLEVGNNMQAIFGPKSDQIKHEMQQIMNGQVVENPTTMEDDKDETVVVAEDKSATSELSHIVHAPLTGEVTPLSEVPDQVFSEKMMGDGIAIKPSQGEVRAPFNGKIQMIFPTKHAIGLVSDSGLELLIHIGLDTVKLNGEGFTLHVEEGQEVKQGDLLINFDLDYIRNHAKSDITPIIVTQGNITNLDFKQGEHGNISFGDQLFEAK</sequence>
<keyword id="KW-1003">Cell membrane</keyword>
<keyword id="KW-0418">Kinase</keyword>
<keyword id="KW-0472">Membrane</keyword>
<keyword id="KW-0598">Phosphotransferase system</keyword>
<keyword id="KW-0762">Sugar transport</keyword>
<keyword id="KW-0808">Transferase</keyword>
<keyword id="KW-0812">Transmembrane</keyword>
<keyword id="KW-1133">Transmembrane helix</keyword>
<keyword id="KW-0813">Transport</keyword>
<gene>
    <name type="primary">ptsG</name>
    <name type="synonym">glcA</name>
    <name type="ordered locus">SaurJH9_0174</name>
</gene>
<feature type="chain" id="PRO_5000247134" description="PTS system glucose-specific EIICBA component">
    <location>
        <begin position="1"/>
        <end position="681"/>
    </location>
</feature>
<feature type="transmembrane region" description="Helical" evidence="4">
    <location>
        <begin position="16"/>
        <end position="36"/>
    </location>
</feature>
<feature type="transmembrane region" description="Helical" evidence="4">
    <location>
        <begin position="73"/>
        <end position="93"/>
    </location>
</feature>
<feature type="transmembrane region" description="Helical" evidence="4">
    <location>
        <begin position="126"/>
        <end position="146"/>
    </location>
</feature>
<feature type="transmembrane region" description="Helical" evidence="4">
    <location>
        <begin position="170"/>
        <end position="190"/>
    </location>
</feature>
<feature type="transmembrane region" description="Helical" evidence="4">
    <location>
        <begin position="199"/>
        <end position="219"/>
    </location>
</feature>
<feature type="transmembrane region" description="Helical" evidence="4">
    <location>
        <begin position="273"/>
        <end position="293"/>
    </location>
</feature>
<feature type="transmembrane region" description="Helical" evidence="4">
    <location>
        <begin position="303"/>
        <end position="323"/>
    </location>
</feature>
<feature type="transmembrane region" description="Helical" evidence="4">
    <location>
        <begin position="328"/>
        <end position="348"/>
    </location>
</feature>
<feature type="transmembrane region" description="Helical" evidence="4">
    <location>
        <begin position="355"/>
        <end position="375"/>
    </location>
</feature>
<feature type="transmembrane region" description="Helical" evidence="4">
    <location>
        <begin position="383"/>
        <end position="403"/>
    </location>
</feature>
<feature type="domain" description="PTS EIIC type-1" evidence="4">
    <location>
        <begin position="3"/>
        <end position="414"/>
    </location>
</feature>
<feature type="domain" description="PTS EIIB type-1" evidence="3">
    <location>
        <begin position="425"/>
        <end position="506"/>
    </location>
</feature>
<feature type="domain" description="PTS EIIA type-1" evidence="2">
    <location>
        <begin position="551"/>
        <end position="655"/>
    </location>
</feature>
<feature type="active site" description="Phosphocysteine intermediate; for EIIB activity" evidence="3">
    <location>
        <position position="447"/>
    </location>
</feature>
<feature type="active site" description="Tele-phosphohistidine intermediate; for EIIA activity" evidence="2">
    <location>
        <position position="603"/>
    </location>
</feature>
<proteinExistence type="inferred from homology"/>
<name>PTG3C_STAA9</name>
<organism>
    <name type="scientific">Staphylococcus aureus (strain JH9)</name>
    <dbReference type="NCBI Taxonomy" id="359786"/>
    <lineage>
        <taxon>Bacteria</taxon>
        <taxon>Bacillati</taxon>
        <taxon>Bacillota</taxon>
        <taxon>Bacilli</taxon>
        <taxon>Bacillales</taxon>
        <taxon>Staphylococcaceae</taxon>
        <taxon>Staphylococcus</taxon>
    </lineage>
</organism>
<protein>
    <recommendedName>
        <fullName evidence="1">PTS system glucose-specific EIICBA component</fullName>
        <ecNumber evidence="1">2.7.1.199</ecNumber>
    </recommendedName>
    <alternativeName>
        <fullName evidence="1">EIICBA-Glc</fullName>
        <shortName evidence="1">EII-Glc</shortName>
    </alternativeName>
    <alternativeName>
        <fullName evidence="5">EIICBA-Glc 1</fullName>
    </alternativeName>
    <domain>
        <recommendedName>
            <fullName evidence="1">Glucose permease IIC component</fullName>
        </recommendedName>
        <alternativeName>
            <fullName evidence="1">PTS system glucose-specific EIIC component</fullName>
        </alternativeName>
    </domain>
    <domain>
        <recommendedName>
            <fullName evidence="1">Glucose-specific phosphotransferase enzyme IIB component</fullName>
        </recommendedName>
        <alternativeName>
            <fullName evidence="1">PTS system glucose-specific EIIB component</fullName>
        </alternativeName>
    </domain>
    <domain>
        <recommendedName>
            <fullName evidence="1">Glucose-specific phosphotransferase enzyme IIA component</fullName>
        </recommendedName>
        <alternativeName>
            <fullName evidence="1">PTS system glucose-specific EIIA component</fullName>
        </alternativeName>
    </domain>
</protein>